<dbReference type="EMBL" id="CU329671">
    <property type="protein sequence ID" value="CAA20725.1"/>
    <property type="molecule type" value="Genomic_DNA"/>
</dbReference>
<dbReference type="EMBL" id="AB011009">
    <property type="protein sequence ID" value="BAA24901.1"/>
    <property type="molecule type" value="mRNA"/>
</dbReference>
<dbReference type="PIR" id="T40502">
    <property type="entry name" value="T40502"/>
</dbReference>
<dbReference type="PIR" id="T43322">
    <property type="entry name" value="T43322"/>
</dbReference>
<dbReference type="SMR" id="O42707"/>
<dbReference type="BioGRID" id="277394">
    <property type="interactions" value="2"/>
</dbReference>
<dbReference type="FunCoup" id="O42707">
    <property type="interactions" value="55"/>
</dbReference>
<dbReference type="STRING" id="284812.O42707"/>
<dbReference type="PaxDb" id="4896-SPBC4F6.05c.1"/>
<dbReference type="EnsemblFungi" id="SPBC4F6.05c.1">
    <property type="protein sequence ID" value="SPBC4F6.05c.1:pep"/>
    <property type="gene ID" value="SPBC4F6.05c"/>
</dbReference>
<dbReference type="KEGG" id="spo:2540877"/>
<dbReference type="PomBase" id="SPBC4F6.05c"/>
<dbReference type="VEuPathDB" id="FungiDB:SPBC4F6.05c"/>
<dbReference type="eggNOG" id="KOG3839">
    <property type="taxonomic scope" value="Eukaryota"/>
</dbReference>
<dbReference type="HOGENOM" id="CLU_719928_0_0_1"/>
<dbReference type="InParanoid" id="O42707"/>
<dbReference type="OMA" id="WYTSERG"/>
<dbReference type="PhylomeDB" id="O42707"/>
<dbReference type="Reactome" id="R-SPO-9013106">
    <property type="pathway name" value="RHOC GTPase cycle"/>
</dbReference>
<dbReference type="PRO" id="PR:O42707"/>
<dbReference type="Proteomes" id="UP000002485">
    <property type="component" value="Chromosome II"/>
</dbReference>
<dbReference type="GO" id="GO:0030134">
    <property type="term" value="C:COPII-coated ER to Golgi transport vesicle"/>
    <property type="evidence" value="ECO:0000318"/>
    <property type="project" value="GO_Central"/>
</dbReference>
<dbReference type="GO" id="GO:0005783">
    <property type="term" value="C:endoplasmic reticulum"/>
    <property type="evidence" value="ECO:0007005"/>
    <property type="project" value="PomBase"/>
</dbReference>
<dbReference type="GO" id="GO:0005789">
    <property type="term" value="C:endoplasmic reticulum membrane"/>
    <property type="evidence" value="ECO:0000318"/>
    <property type="project" value="GO_Central"/>
</dbReference>
<dbReference type="GO" id="GO:0005793">
    <property type="term" value="C:endoplasmic reticulum-Golgi intermediate compartment"/>
    <property type="evidence" value="ECO:0000318"/>
    <property type="project" value="GO_Central"/>
</dbReference>
<dbReference type="GO" id="GO:0005794">
    <property type="term" value="C:Golgi apparatus"/>
    <property type="evidence" value="ECO:0007005"/>
    <property type="project" value="PomBase"/>
</dbReference>
<dbReference type="GO" id="GO:0000139">
    <property type="term" value="C:Golgi membrane"/>
    <property type="evidence" value="ECO:0000318"/>
    <property type="project" value="GO_Central"/>
</dbReference>
<dbReference type="GO" id="GO:0005537">
    <property type="term" value="F:D-mannose binding"/>
    <property type="evidence" value="ECO:0000318"/>
    <property type="project" value="GO_Central"/>
</dbReference>
<dbReference type="GO" id="GO:0006888">
    <property type="term" value="P:endoplasmic reticulum to Golgi vesicle-mediated transport"/>
    <property type="evidence" value="ECO:0000318"/>
    <property type="project" value="GO_Central"/>
</dbReference>
<dbReference type="GO" id="GO:0006886">
    <property type="term" value="P:intracellular protein transport"/>
    <property type="evidence" value="ECO:0000305"/>
    <property type="project" value="PomBase"/>
</dbReference>
<dbReference type="CDD" id="cd07308">
    <property type="entry name" value="lectin_leg-like"/>
    <property type="match status" value="1"/>
</dbReference>
<dbReference type="Gene3D" id="2.60.120.200">
    <property type="match status" value="1"/>
</dbReference>
<dbReference type="InterPro" id="IPR013320">
    <property type="entry name" value="ConA-like_dom_sf"/>
</dbReference>
<dbReference type="InterPro" id="IPR051136">
    <property type="entry name" value="Intracellular_Lectin-GPT"/>
</dbReference>
<dbReference type="InterPro" id="IPR005052">
    <property type="entry name" value="Lectin_leg"/>
</dbReference>
<dbReference type="PANTHER" id="PTHR12223:SF45">
    <property type="entry name" value="RE50040P"/>
    <property type="match status" value="1"/>
</dbReference>
<dbReference type="PANTHER" id="PTHR12223">
    <property type="entry name" value="VESICULAR MANNOSE-BINDING LECTIN"/>
    <property type="match status" value="1"/>
</dbReference>
<dbReference type="Pfam" id="PF03388">
    <property type="entry name" value="Lectin_leg-like"/>
    <property type="match status" value="1"/>
</dbReference>
<dbReference type="SUPFAM" id="SSF49899">
    <property type="entry name" value="Concanavalin A-like lectins/glucanases"/>
    <property type="match status" value="1"/>
</dbReference>
<dbReference type="PROSITE" id="PS51328">
    <property type="entry name" value="L_LECTIN_LIKE"/>
    <property type="match status" value="1"/>
</dbReference>
<proteinExistence type="evidence at transcript level"/>
<feature type="signal peptide" evidence="1">
    <location>
        <begin position="1"/>
        <end position="19"/>
    </location>
</feature>
<feature type="chain" id="PRO_0000316861" description="L-type lectin-like domain-containing protein C4F6.05c" evidence="1">
    <location>
        <begin position="20"/>
        <end position="384"/>
    </location>
</feature>
<feature type="topological domain" description="Extracellular" evidence="1">
    <location>
        <begin position="20"/>
        <end position="353"/>
    </location>
</feature>
<feature type="transmembrane region" description="Helical" evidence="1">
    <location>
        <begin position="354"/>
        <end position="374"/>
    </location>
</feature>
<feature type="topological domain" description="Cytoplasmic" evidence="1">
    <location>
        <begin position="375"/>
        <end position="384"/>
    </location>
</feature>
<feature type="domain" description="L-type lectin-like" evidence="2">
    <location>
        <begin position="20"/>
        <end position="224"/>
    </location>
</feature>
<feature type="region of interest" description="Disordered" evidence="3">
    <location>
        <begin position="227"/>
        <end position="251"/>
    </location>
</feature>
<protein>
    <recommendedName>
        <fullName>L-type lectin-like domain-containing protein C4F6.05c</fullName>
    </recommendedName>
</protein>
<sequence>MKFCSLFHVLSFCCTLAYAVPKSQFLQLHSLSNAIPVEWKWYGSVDEDSGYVYLTSKDSNEARSGSLWSTSVLRQVGWQLSTSFVAHVSENENTFFAIWYTSAVGSEGPVFGASDKWDGLLISQEIDQTGKIFVRGYLNDKSFELAQFTDPDLPPFAKCTIESSPEALNNIILKYGDQSGLELFVNDKPCFQVKDVILPQGYYFGVSSQSTSAKDLVALSNLNILPPDTSNNENLNPTSNTKQSVGDNTSPQTVIDTEGLNAIKADLAKLFNLVESQRQKMDSLHFALTNALERLNDISSTSQFPSERFNALEKLLHDSLSAQSSTADGTSKHLAEFEKEIKKAMGNAYSPYNLTNFMVFLLLGAIVSYGIMLVRRDRRRHKYL</sequence>
<organism>
    <name type="scientific">Schizosaccharomyces pombe (strain 972 / ATCC 24843)</name>
    <name type="common">Fission yeast</name>
    <dbReference type="NCBI Taxonomy" id="284812"/>
    <lineage>
        <taxon>Eukaryota</taxon>
        <taxon>Fungi</taxon>
        <taxon>Dikarya</taxon>
        <taxon>Ascomycota</taxon>
        <taxon>Taphrinomycotina</taxon>
        <taxon>Schizosaccharomycetes</taxon>
        <taxon>Schizosaccharomycetales</taxon>
        <taxon>Schizosaccharomycetaceae</taxon>
        <taxon>Schizosaccharomyces</taxon>
    </lineage>
</organism>
<comment type="subcellular location">
    <subcellularLocation>
        <location evidence="1">Membrane</location>
        <topology evidence="5">Single-pass type I membrane protein</topology>
    </subcellularLocation>
    <subcellularLocation>
        <location evidence="4">Endoplasmic reticulum</location>
    </subcellularLocation>
    <subcellularLocation>
        <location evidence="4">Golgi apparatus</location>
    </subcellularLocation>
</comment>
<keyword id="KW-0256">Endoplasmic reticulum</keyword>
<keyword id="KW-0333">Golgi apparatus</keyword>
<keyword id="KW-0472">Membrane</keyword>
<keyword id="KW-1185">Reference proteome</keyword>
<keyword id="KW-0732">Signal</keyword>
<keyword id="KW-0812">Transmembrane</keyword>
<keyword id="KW-1133">Transmembrane helix</keyword>
<reference evidence="7" key="1">
    <citation type="journal article" date="2002" name="Nature">
        <title>The genome sequence of Schizosaccharomyces pombe.</title>
        <authorList>
            <person name="Wood V."/>
            <person name="Gwilliam R."/>
            <person name="Rajandream M.A."/>
            <person name="Lyne M.H."/>
            <person name="Lyne R."/>
            <person name="Stewart A."/>
            <person name="Sgouros J.G."/>
            <person name="Peat N."/>
            <person name="Hayles J."/>
            <person name="Baker S.G."/>
            <person name="Basham D."/>
            <person name="Bowman S."/>
            <person name="Brooks K."/>
            <person name="Brown D."/>
            <person name="Brown S."/>
            <person name="Chillingworth T."/>
            <person name="Churcher C.M."/>
            <person name="Collins M."/>
            <person name="Connor R."/>
            <person name="Cronin A."/>
            <person name="Davis P."/>
            <person name="Feltwell T."/>
            <person name="Fraser A."/>
            <person name="Gentles S."/>
            <person name="Goble A."/>
            <person name="Hamlin N."/>
            <person name="Harris D.E."/>
            <person name="Hidalgo J."/>
            <person name="Hodgson G."/>
            <person name="Holroyd S."/>
            <person name="Hornsby T."/>
            <person name="Howarth S."/>
            <person name="Huckle E.J."/>
            <person name="Hunt S."/>
            <person name="Jagels K."/>
            <person name="James K.D."/>
            <person name="Jones L."/>
            <person name="Jones M."/>
            <person name="Leather S."/>
            <person name="McDonald S."/>
            <person name="McLean J."/>
            <person name="Mooney P."/>
            <person name="Moule S."/>
            <person name="Mungall K.L."/>
            <person name="Murphy L.D."/>
            <person name="Niblett D."/>
            <person name="Odell C."/>
            <person name="Oliver K."/>
            <person name="O'Neil S."/>
            <person name="Pearson D."/>
            <person name="Quail M.A."/>
            <person name="Rabbinowitsch E."/>
            <person name="Rutherford K.M."/>
            <person name="Rutter S."/>
            <person name="Saunders D."/>
            <person name="Seeger K."/>
            <person name="Sharp S."/>
            <person name="Skelton J."/>
            <person name="Simmonds M.N."/>
            <person name="Squares R."/>
            <person name="Squares S."/>
            <person name="Stevens K."/>
            <person name="Taylor K."/>
            <person name="Taylor R.G."/>
            <person name="Tivey A."/>
            <person name="Walsh S.V."/>
            <person name="Warren T."/>
            <person name="Whitehead S."/>
            <person name="Woodward J.R."/>
            <person name="Volckaert G."/>
            <person name="Aert R."/>
            <person name="Robben J."/>
            <person name="Grymonprez B."/>
            <person name="Weltjens I."/>
            <person name="Vanstreels E."/>
            <person name="Rieger M."/>
            <person name="Schaefer M."/>
            <person name="Mueller-Auer S."/>
            <person name="Gabel C."/>
            <person name="Fuchs M."/>
            <person name="Duesterhoeft A."/>
            <person name="Fritzc C."/>
            <person name="Holzer E."/>
            <person name="Moestl D."/>
            <person name="Hilbert H."/>
            <person name="Borzym K."/>
            <person name="Langer I."/>
            <person name="Beck A."/>
            <person name="Lehrach H."/>
            <person name="Reinhardt R."/>
            <person name="Pohl T.M."/>
            <person name="Eger P."/>
            <person name="Zimmermann W."/>
            <person name="Wedler H."/>
            <person name="Wambutt R."/>
            <person name="Purnelle B."/>
            <person name="Goffeau A."/>
            <person name="Cadieu E."/>
            <person name="Dreano S."/>
            <person name="Gloux S."/>
            <person name="Lelaure V."/>
            <person name="Mottier S."/>
            <person name="Galibert F."/>
            <person name="Aves S.J."/>
            <person name="Xiang Z."/>
            <person name="Hunt C."/>
            <person name="Moore K."/>
            <person name="Hurst S.M."/>
            <person name="Lucas M."/>
            <person name="Rochet M."/>
            <person name="Gaillardin C."/>
            <person name="Tallada V.A."/>
            <person name="Garzon A."/>
            <person name="Thode G."/>
            <person name="Daga R.R."/>
            <person name="Cruzado L."/>
            <person name="Jimenez J."/>
            <person name="Sanchez M."/>
            <person name="del Rey F."/>
            <person name="Benito J."/>
            <person name="Dominguez A."/>
            <person name="Revuelta J.L."/>
            <person name="Moreno S."/>
            <person name="Armstrong J."/>
            <person name="Forsburg S.L."/>
            <person name="Cerutti L."/>
            <person name="Lowe T."/>
            <person name="McCombie W.R."/>
            <person name="Paulsen I."/>
            <person name="Potashkin J."/>
            <person name="Shpakovski G.V."/>
            <person name="Ussery D."/>
            <person name="Barrell B.G."/>
            <person name="Nurse P."/>
        </authorList>
    </citation>
    <scope>NUCLEOTIDE SEQUENCE [LARGE SCALE GENOMIC DNA]</scope>
    <source>
        <strain>972 / ATCC 24843</strain>
    </source>
</reference>
<reference evidence="5 6" key="2">
    <citation type="submission" date="1998-02" db="EMBL/GenBank/DDBJ databases">
        <title>S.pombe unknown protein.</title>
        <authorList>
            <person name="Kawamukai M."/>
        </authorList>
    </citation>
    <scope>NUCLEOTIDE SEQUENCE [MRNA] OF 240-384</scope>
</reference>
<reference evidence="5" key="3">
    <citation type="journal article" date="2006" name="Nat. Biotechnol.">
        <title>ORFeome cloning and global analysis of protein localization in the fission yeast Schizosaccharomyces pombe.</title>
        <authorList>
            <person name="Matsuyama A."/>
            <person name="Arai R."/>
            <person name="Yashiroda Y."/>
            <person name="Shirai A."/>
            <person name="Kamata A."/>
            <person name="Sekido S."/>
            <person name="Kobayashi Y."/>
            <person name="Hashimoto A."/>
            <person name="Hamamoto M."/>
            <person name="Hiraoka Y."/>
            <person name="Horinouchi S."/>
            <person name="Yoshida M."/>
        </authorList>
    </citation>
    <scope>SUBCELLULAR LOCATION [LARGE SCALE ANALYSIS]</scope>
</reference>
<accession>O42707</accession>
<accession>Q7LWC7</accession>
<evidence type="ECO:0000255" key="1"/>
<evidence type="ECO:0000255" key="2">
    <source>
        <dbReference type="PROSITE-ProRule" id="PRU00658"/>
    </source>
</evidence>
<evidence type="ECO:0000256" key="3">
    <source>
        <dbReference type="SAM" id="MobiDB-lite"/>
    </source>
</evidence>
<evidence type="ECO:0000269" key="4">
    <source>
    </source>
</evidence>
<evidence type="ECO:0000305" key="5"/>
<evidence type="ECO:0000312" key="6">
    <source>
        <dbReference type="EMBL" id="BAA24901.1"/>
    </source>
</evidence>
<evidence type="ECO:0000312" key="7">
    <source>
        <dbReference type="EMBL" id="CAA20725.1"/>
    </source>
</evidence>
<gene>
    <name type="ORF">SPBC4F6.05c</name>
</gene>
<name>YOC5_SCHPO</name>